<gene>
    <name type="ordered locus">ECA2367</name>
</gene>
<dbReference type="EMBL" id="BX950851">
    <property type="protein sequence ID" value="CAG75270.1"/>
    <property type="status" value="ALT_INIT"/>
    <property type="molecule type" value="Genomic_DNA"/>
</dbReference>
<dbReference type="RefSeq" id="WP_043878056.1">
    <property type="nucleotide sequence ID" value="NC_004547.2"/>
</dbReference>
<dbReference type="SMR" id="Q6D4M3"/>
<dbReference type="STRING" id="218491.ECA2367"/>
<dbReference type="KEGG" id="eca:ECA2367"/>
<dbReference type="PATRIC" id="fig|218491.5.peg.2393"/>
<dbReference type="eggNOG" id="COG3100">
    <property type="taxonomic scope" value="Bacteria"/>
</dbReference>
<dbReference type="HOGENOM" id="CLU_155118_1_0_6"/>
<dbReference type="OrthoDB" id="7062382at2"/>
<dbReference type="Proteomes" id="UP000007966">
    <property type="component" value="Chromosome"/>
</dbReference>
<dbReference type="Gene3D" id="3.10.510.20">
    <property type="entry name" value="YcgL domain"/>
    <property type="match status" value="1"/>
</dbReference>
<dbReference type="HAMAP" id="MF_01866">
    <property type="entry name" value="UPF0745"/>
    <property type="match status" value="1"/>
</dbReference>
<dbReference type="InterPro" id="IPR038068">
    <property type="entry name" value="YcgL-like_sf"/>
</dbReference>
<dbReference type="InterPro" id="IPR027354">
    <property type="entry name" value="YcgL_dom"/>
</dbReference>
<dbReference type="PANTHER" id="PTHR38109">
    <property type="entry name" value="PROTEIN YCGL"/>
    <property type="match status" value="1"/>
</dbReference>
<dbReference type="PANTHER" id="PTHR38109:SF1">
    <property type="entry name" value="PROTEIN YCGL"/>
    <property type="match status" value="1"/>
</dbReference>
<dbReference type="Pfam" id="PF05166">
    <property type="entry name" value="YcgL"/>
    <property type="match status" value="1"/>
</dbReference>
<dbReference type="SUPFAM" id="SSF160191">
    <property type="entry name" value="YcgL-like"/>
    <property type="match status" value="1"/>
</dbReference>
<dbReference type="PROSITE" id="PS51648">
    <property type="entry name" value="YCGL"/>
    <property type="match status" value="1"/>
</dbReference>
<feature type="chain" id="PRO_0000375287" description="YcgL domain-containing protein ECA2367">
    <location>
        <begin position="1"/>
        <end position="85"/>
    </location>
</feature>
<feature type="domain" description="YcgL" evidence="1">
    <location>
        <begin position="1"/>
        <end position="85"/>
    </location>
</feature>
<accession>Q6D4M3</accession>
<comment type="sequence caution" evidence="2">
    <conflict type="erroneous initiation">
        <sequence resource="EMBL-CDS" id="CAG75270"/>
    </conflict>
</comment>
<keyword id="KW-1185">Reference proteome</keyword>
<organism>
    <name type="scientific">Pectobacterium atrosepticum (strain SCRI 1043 / ATCC BAA-672)</name>
    <name type="common">Erwinia carotovora subsp. atroseptica</name>
    <dbReference type="NCBI Taxonomy" id="218491"/>
    <lineage>
        <taxon>Bacteria</taxon>
        <taxon>Pseudomonadati</taxon>
        <taxon>Pseudomonadota</taxon>
        <taxon>Gammaproteobacteria</taxon>
        <taxon>Enterobacterales</taxon>
        <taxon>Pectobacteriaceae</taxon>
        <taxon>Pectobacterium</taxon>
    </lineage>
</organism>
<name>Y2367_PECAS</name>
<proteinExistence type="inferred from homology"/>
<reference key="1">
    <citation type="journal article" date="2004" name="Proc. Natl. Acad. Sci. U.S.A.">
        <title>Genome sequence of the enterobacterial phytopathogen Erwinia carotovora subsp. atroseptica and characterization of virulence factors.</title>
        <authorList>
            <person name="Bell K.S."/>
            <person name="Sebaihia M."/>
            <person name="Pritchard L."/>
            <person name="Holden M.T.G."/>
            <person name="Hyman L.J."/>
            <person name="Holeva M.C."/>
            <person name="Thomson N.R."/>
            <person name="Bentley S.D."/>
            <person name="Churcher L.J.C."/>
            <person name="Mungall K."/>
            <person name="Atkin R."/>
            <person name="Bason N."/>
            <person name="Brooks K."/>
            <person name="Chillingworth T."/>
            <person name="Clark K."/>
            <person name="Doggett J."/>
            <person name="Fraser A."/>
            <person name="Hance Z."/>
            <person name="Hauser H."/>
            <person name="Jagels K."/>
            <person name="Moule S."/>
            <person name="Norbertczak H."/>
            <person name="Ormond D."/>
            <person name="Price C."/>
            <person name="Quail M.A."/>
            <person name="Sanders M."/>
            <person name="Walker D."/>
            <person name="Whitehead S."/>
            <person name="Salmond G.P.C."/>
            <person name="Birch P.R.J."/>
            <person name="Parkhill J."/>
            <person name="Toth I.K."/>
        </authorList>
    </citation>
    <scope>NUCLEOTIDE SEQUENCE [LARGE SCALE GENOMIC DNA]</scope>
    <source>
        <strain>SCRI 1043 / ATCC BAA-672</strain>
    </source>
</reference>
<sequence length="85" mass="9731">MFCVIYRSVKRDQTYLYVEKKDDFSRVPEELMKSFGAPQLAMVLPLNGRKKLANADIEKVKLALQEQGFYLQVPPPVESLLTTPV</sequence>
<evidence type="ECO:0000255" key="1">
    <source>
        <dbReference type="HAMAP-Rule" id="MF_01866"/>
    </source>
</evidence>
<evidence type="ECO:0000305" key="2"/>
<protein>
    <recommendedName>
        <fullName evidence="1">YcgL domain-containing protein ECA2367</fullName>
    </recommendedName>
</protein>